<name>RPOZ_SHEB5</name>
<organism>
    <name type="scientific">Shewanella baltica (strain OS155 / ATCC BAA-1091)</name>
    <dbReference type="NCBI Taxonomy" id="325240"/>
    <lineage>
        <taxon>Bacteria</taxon>
        <taxon>Pseudomonadati</taxon>
        <taxon>Pseudomonadota</taxon>
        <taxon>Gammaproteobacteria</taxon>
        <taxon>Alteromonadales</taxon>
        <taxon>Shewanellaceae</taxon>
        <taxon>Shewanella</taxon>
    </lineage>
</organism>
<accession>A3CZH4</accession>
<dbReference type="EC" id="2.7.7.6" evidence="1"/>
<dbReference type="EMBL" id="CP000563">
    <property type="protein sequence ID" value="ABN59887.1"/>
    <property type="molecule type" value="Genomic_DNA"/>
</dbReference>
<dbReference type="RefSeq" id="WP_006079841.1">
    <property type="nucleotide sequence ID" value="NC_009052.1"/>
</dbReference>
<dbReference type="SMR" id="A3CZH4"/>
<dbReference type="STRING" id="325240.Sbal_0354"/>
<dbReference type="GeneID" id="11770701"/>
<dbReference type="KEGG" id="sbl:Sbal_0354"/>
<dbReference type="HOGENOM" id="CLU_125406_5_3_6"/>
<dbReference type="OrthoDB" id="9796300at2"/>
<dbReference type="Proteomes" id="UP000001557">
    <property type="component" value="Chromosome"/>
</dbReference>
<dbReference type="GO" id="GO:0000428">
    <property type="term" value="C:DNA-directed RNA polymerase complex"/>
    <property type="evidence" value="ECO:0007669"/>
    <property type="project" value="UniProtKB-KW"/>
</dbReference>
<dbReference type="GO" id="GO:0003677">
    <property type="term" value="F:DNA binding"/>
    <property type="evidence" value="ECO:0007669"/>
    <property type="project" value="UniProtKB-UniRule"/>
</dbReference>
<dbReference type="GO" id="GO:0003899">
    <property type="term" value="F:DNA-directed RNA polymerase activity"/>
    <property type="evidence" value="ECO:0007669"/>
    <property type="project" value="UniProtKB-UniRule"/>
</dbReference>
<dbReference type="GO" id="GO:0006351">
    <property type="term" value="P:DNA-templated transcription"/>
    <property type="evidence" value="ECO:0007669"/>
    <property type="project" value="UniProtKB-UniRule"/>
</dbReference>
<dbReference type="Gene3D" id="3.90.940.10">
    <property type="match status" value="1"/>
</dbReference>
<dbReference type="HAMAP" id="MF_00366">
    <property type="entry name" value="RNApol_bact_RpoZ"/>
    <property type="match status" value="1"/>
</dbReference>
<dbReference type="InterPro" id="IPR003716">
    <property type="entry name" value="DNA-dir_RNA_pol_omega"/>
</dbReference>
<dbReference type="InterPro" id="IPR006110">
    <property type="entry name" value="Pol_omega/Rpo6/RPB6"/>
</dbReference>
<dbReference type="InterPro" id="IPR036161">
    <property type="entry name" value="RPB6/omega-like_sf"/>
</dbReference>
<dbReference type="NCBIfam" id="TIGR00690">
    <property type="entry name" value="rpoZ"/>
    <property type="match status" value="1"/>
</dbReference>
<dbReference type="PANTHER" id="PTHR34476">
    <property type="entry name" value="DNA-DIRECTED RNA POLYMERASE SUBUNIT OMEGA"/>
    <property type="match status" value="1"/>
</dbReference>
<dbReference type="PANTHER" id="PTHR34476:SF1">
    <property type="entry name" value="DNA-DIRECTED RNA POLYMERASE SUBUNIT OMEGA"/>
    <property type="match status" value="1"/>
</dbReference>
<dbReference type="Pfam" id="PF01192">
    <property type="entry name" value="RNA_pol_Rpb6"/>
    <property type="match status" value="1"/>
</dbReference>
<dbReference type="SMART" id="SM01409">
    <property type="entry name" value="RNA_pol_Rpb6"/>
    <property type="match status" value="1"/>
</dbReference>
<dbReference type="SUPFAM" id="SSF63562">
    <property type="entry name" value="RPB6/omega subunit-like"/>
    <property type="match status" value="1"/>
</dbReference>
<keyword id="KW-0240">DNA-directed RNA polymerase</keyword>
<keyword id="KW-0548">Nucleotidyltransferase</keyword>
<keyword id="KW-1185">Reference proteome</keyword>
<keyword id="KW-0804">Transcription</keyword>
<keyword id="KW-0808">Transferase</keyword>
<comment type="function">
    <text evidence="1">Promotes RNA polymerase assembly. Latches the N- and C-terminal regions of the beta' subunit thereby facilitating its interaction with the beta and alpha subunits.</text>
</comment>
<comment type="catalytic activity">
    <reaction evidence="1">
        <text>RNA(n) + a ribonucleoside 5'-triphosphate = RNA(n+1) + diphosphate</text>
        <dbReference type="Rhea" id="RHEA:21248"/>
        <dbReference type="Rhea" id="RHEA-COMP:14527"/>
        <dbReference type="Rhea" id="RHEA-COMP:17342"/>
        <dbReference type="ChEBI" id="CHEBI:33019"/>
        <dbReference type="ChEBI" id="CHEBI:61557"/>
        <dbReference type="ChEBI" id="CHEBI:140395"/>
        <dbReference type="EC" id="2.7.7.6"/>
    </reaction>
</comment>
<comment type="subunit">
    <text evidence="1">The RNAP catalytic core consists of 2 alpha, 1 beta, 1 beta' and 1 omega subunit. When a sigma factor is associated with the core the holoenzyme is formed, which can initiate transcription.</text>
</comment>
<comment type="similarity">
    <text evidence="1">Belongs to the RNA polymerase subunit omega family.</text>
</comment>
<feature type="chain" id="PRO_1000006007" description="DNA-directed RNA polymerase subunit omega">
    <location>
        <begin position="1"/>
        <end position="92"/>
    </location>
</feature>
<gene>
    <name evidence="1" type="primary">rpoZ</name>
    <name type="ordered locus">Sbal_0354</name>
</gene>
<sequence>MARVTVEDAVEQIGNRFDMILVAARRARQIAVQGKDPMVEEMNDKPTVIALREIELGLVNAHTLDADERQTVREREAAEIAAVSAIAEGRSL</sequence>
<evidence type="ECO:0000255" key="1">
    <source>
        <dbReference type="HAMAP-Rule" id="MF_00366"/>
    </source>
</evidence>
<protein>
    <recommendedName>
        <fullName evidence="1">DNA-directed RNA polymerase subunit omega</fullName>
        <shortName evidence="1">RNAP omega subunit</shortName>
        <ecNumber evidence="1">2.7.7.6</ecNumber>
    </recommendedName>
    <alternativeName>
        <fullName evidence="1">RNA polymerase omega subunit</fullName>
    </alternativeName>
    <alternativeName>
        <fullName evidence="1">Transcriptase subunit omega</fullName>
    </alternativeName>
</protein>
<reference key="1">
    <citation type="submission" date="2007-02" db="EMBL/GenBank/DDBJ databases">
        <title>Complete sequence of chromosome of Shewanella baltica OS155.</title>
        <authorList>
            <consortium name="US DOE Joint Genome Institute"/>
            <person name="Copeland A."/>
            <person name="Lucas S."/>
            <person name="Lapidus A."/>
            <person name="Barry K."/>
            <person name="Detter J.C."/>
            <person name="Glavina del Rio T."/>
            <person name="Hammon N."/>
            <person name="Israni S."/>
            <person name="Dalin E."/>
            <person name="Tice H."/>
            <person name="Pitluck S."/>
            <person name="Sims D.R."/>
            <person name="Brettin T."/>
            <person name="Bruce D."/>
            <person name="Han C."/>
            <person name="Tapia R."/>
            <person name="Brainard J."/>
            <person name="Schmutz J."/>
            <person name="Larimer F."/>
            <person name="Land M."/>
            <person name="Hauser L."/>
            <person name="Kyrpides N."/>
            <person name="Mikhailova N."/>
            <person name="Brettar I."/>
            <person name="Klappenbach J."/>
            <person name="Konstantinidis K."/>
            <person name="Rodrigues J."/>
            <person name="Tiedje J."/>
            <person name="Richardson P."/>
        </authorList>
    </citation>
    <scope>NUCLEOTIDE SEQUENCE [LARGE SCALE GENOMIC DNA]</scope>
    <source>
        <strain>OS155 / ATCC BAA-1091</strain>
    </source>
</reference>
<proteinExistence type="inferred from homology"/>